<organism>
    <name type="scientific">Arabidopsis thaliana</name>
    <name type="common">Mouse-ear cress</name>
    <dbReference type="NCBI Taxonomy" id="3702"/>
    <lineage>
        <taxon>Eukaryota</taxon>
        <taxon>Viridiplantae</taxon>
        <taxon>Streptophyta</taxon>
        <taxon>Embryophyta</taxon>
        <taxon>Tracheophyta</taxon>
        <taxon>Spermatophyta</taxon>
        <taxon>Magnoliopsida</taxon>
        <taxon>eudicotyledons</taxon>
        <taxon>Gunneridae</taxon>
        <taxon>Pentapetalae</taxon>
        <taxon>rosids</taxon>
        <taxon>malvids</taxon>
        <taxon>Brassicales</taxon>
        <taxon>Brassicaceae</taxon>
        <taxon>Camelineae</taxon>
        <taxon>Arabidopsis</taxon>
    </lineage>
</organism>
<comment type="subcellular location">
    <subcellularLocation>
        <location evidence="2">Endoplasmic reticulum membrane</location>
        <topology evidence="1">Multi-pass membrane protein</topology>
    </subcellularLocation>
    <subcellularLocation>
        <location evidence="2">Vacuole membrane</location>
        <topology evidence="1">Multi-pass membrane protein</topology>
    </subcellularLocation>
    <text evidence="2">Predominantly located in endoplasmic reticulum membrane.</text>
</comment>
<comment type="similarity">
    <text evidence="4">Belongs to the amino acid/polyamine transporter 2 family. Amino acid/auxin permease (AAAP) (TC 2.A.18.6) subfamily.</text>
</comment>
<feature type="chain" id="PRO_0000440116" description="Amino acid transporter AVT6E">
    <location>
        <begin position="1"/>
        <end position="489"/>
    </location>
</feature>
<feature type="transmembrane region" description="Helical; Name=1" evidence="1">
    <location>
        <begin position="76"/>
        <end position="96"/>
    </location>
</feature>
<feature type="transmembrane region" description="Helical; Name=2" evidence="1">
    <location>
        <begin position="102"/>
        <end position="122"/>
    </location>
</feature>
<feature type="transmembrane region" description="Helical; Name=3" evidence="1">
    <location>
        <begin position="156"/>
        <end position="176"/>
    </location>
</feature>
<feature type="transmembrane region" description="Helical; Name=4" evidence="1">
    <location>
        <begin position="201"/>
        <end position="221"/>
    </location>
</feature>
<feature type="transmembrane region" description="Helical; Name=5" evidence="1">
    <location>
        <begin position="227"/>
        <end position="247"/>
    </location>
</feature>
<feature type="transmembrane region" description="Helical; Name=6" evidence="1">
    <location>
        <begin position="269"/>
        <end position="289"/>
    </location>
</feature>
<feature type="transmembrane region" description="Helical; Name=7" evidence="1">
    <location>
        <begin position="310"/>
        <end position="330"/>
    </location>
</feature>
<feature type="transmembrane region" description="Helical; Name=8" evidence="1">
    <location>
        <begin position="357"/>
        <end position="377"/>
    </location>
</feature>
<feature type="transmembrane region" description="Helical; Name=9" evidence="1">
    <location>
        <begin position="404"/>
        <end position="424"/>
    </location>
</feature>
<feature type="transmembrane region" description="Helical; Name=10" evidence="1">
    <location>
        <begin position="425"/>
        <end position="445"/>
    </location>
</feature>
<feature type="transmembrane region" description="Helical; Name=11" evidence="1">
    <location>
        <begin position="461"/>
        <end position="481"/>
    </location>
</feature>
<proteinExistence type="evidence at transcript level"/>
<reference key="1">
    <citation type="journal article" date="2000" name="Nature">
        <title>Sequence and analysis of chromosome 1 of the plant Arabidopsis thaliana.</title>
        <authorList>
            <person name="Theologis A."/>
            <person name="Ecker J.R."/>
            <person name="Palm C.J."/>
            <person name="Federspiel N.A."/>
            <person name="Kaul S."/>
            <person name="White O."/>
            <person name="Alonso J."/>
            <person name="Altafi H."/>
            <person name="Araujo R."/>
            <person name="Bowman C.L."/>
            <person name="Brooks S.Y."/>
            <person name="Buehler E."/>
            <person name="Chan A."/>
            <person name="Chao Q."/>
            <person name="Chen H."/>
            <person name="Cheuk R.F."/>
            <person name="Chin C.W."/>
            <person name="Chung M.K."/>
            <person name="Conn L."/>
            <person name="Conway A.B."/>
            <person name="Conway A.R."/>
            <person name="Creasy T.H."/>
            <person name="Dewar K."/>
            <person name="Dunn P."/>
            <person name="Etgu P."/>
            <person name="Feldblyum T.V."/>
            <person name="Feng J.-D."/>
            <person name="Fong B."/>
            <person name="Fujii C.Y."/>
            <person name="Gill J.E."/>
            <person name="Goldsmith A.D."/>
            <person name="Haas B."/>
            <person name="Hansen N.F."/>
            <person name="Hughes B."/>
            <person name="Huizar L."/>
            <person name="Hunter J.L."/>
            <person name="Jenkins J."/>
            <person name="Johnson-Hopson C."/>
            <person name="Khan S."/>
            <person name="Khaykin E."/>
            <person name="Kim C.J."/>
            <person name="Koo H.L."/>
            <person name="Kremenetskaia I."/>
            <person name="Kurtz D.B."/>
            <person name="Kwan A."/>
            <person name="Lam B."/>
            <person name="Langin-Hooper S."/>
            <person name="Lee A."/>
            <person name="Lee J.M."/>
            <person name="Lenz C.A."/>
            <person name="Li J.H."/>
            <person name="Li Y.-P."/>
            <person name="Lin X."/>
            <person name="Liu S.X."/>
            <person name="Liu Z.A."/>
            <person name="Luros J.S."/>
            <person name="Maiti R."/>
            <person name="Marziali A."/>
            <person name="Militscher J."/>
            <person name="Miranda M."/>
            <person name="Nguyen M."/>
            <person name="Nierman W.C."/>
            <person name="Osborne B.I."/>
            <person name="Pai G."/>
            <person name="Peterson J."/>
            <person name="Pham P.K."/>
            <person name="Rizzo M."/>
            <person name="Rooney T."/>
            <person name="Rowley D."/>
            <person name="Sakano H."/>
            <person name="Salzberg S.L."/>
            <person name="Schwartz J.R."/>
            <person name="Shinn P."/>
            <person name="Southwick A.M."/>
            <person name="Sun H."/>
            <person name="Tallon L.J."/>
            <person name="Tambunga G."/>
            <person name="Toriumi M.J."/>
            <person name="Town C.D."/>
            <person name="Utterback T."/>
            <person name="Van Aken S."/>
            <person name="Vaysberg M."/>
            <person name="Vysotskaia V.S."/>
            <person name="Walker M."/>
            <person name="Wu D."/>
            <person name="Yu G."/>
            <person name="Fraser C.M."/>
            <person name="Venter J.C."/>
            <person name="Davis R.W."/>
        </authorList>
    </citation>
    <scope>NUCLEOTIDE SEQUENCE [LARGE SCALE GENOMIC DNA]</scope>
    <source>
        <strain>cv. Columbia</strain>
    </source>
</reference>
<reference key="2">
    <citation type="journal article" date="2017" name="Plant J.">
        <title>Araport11: a complete reannotation of the Arabidopsis thaliana reference genome.</title>
        <authorList>
            <person name="Cheng C.Y."/>
            <person name="Krishnakumar V."/>
            <person name="Chan A.P."/>
            <person name="Thibaud-Nissen F."/>
            <person name="Schobel S."/>
            <person name="Town C.D."/>
        </authorList>
    </citation>
    <scope>GENOME REANNOTATION</scope>
    <source>
        <strain>cv. Columbia</strain>
    </source>
</reference>
<reference key="3">
    <citation type="journal article" date="2003" name="Science">
        <title>Empirical analysis of transcriptional activity in the Arabidopsis genome.</title>
        <authorList>
            <person name="Yamada K."/>
            <person name="Lim J."/>
            <person name="Dale J.M."/>
            <person name="Chen H."/>
            <person name="Shinn P."/>
            <person name="Palm C.J."/>
            <person name="Southwick A.M."/>
            <person name="Wu H.C."/>
            <person name="Kim C.J."/>
            <person name="Nguyen M."/>
            <person name="Pham P.K."/>
            <person name="Cheuk R.F."/>
            <person name="Karlin-Newmann G."/>
            <person name="Liu S.X."/>
            <person name="Lam B."/>
            <person name="Sakano H."/>
            <person name="Wu T."/>
            <person name="Yu G."/>
            <person name="Miranda M."/>
            <person name="Quach H.L."/>
            <person name="Tripp M."/>
            <person name="Chang C.H."/>
            <person name="Lee J.M."/>
            <person name="Toriumi M.J."/>
            <person name="Chan M.M."/>
            <person name="Tang C.C."/>
            <person name="Onodera C.S."/>
            <person name="Deng J.M."/>
            <person name="Akiyama K."/>
            <person name="Ansari Y."/>
            <person name="Arakawa T."/>
            <person name="Banh J."/>
            <person name="Banno F."/>
            <person name="Bowser L."/>
            <person name="Brooks S.Y."/>
            <person name="Carninci P."/>
            <person name="Chao Q."/>
            <person name="Choy N."/>
            <person name="Enju A."/>
            <person name="Goldsmith A.D."/>
            <person name="Gurjal M."/>
            <person name="Hansen N.F."/>
            <person name="Hayashizaki Y."/>
            <person name="Johnson-Hopson C."/>
            <person name="Hsuan V.W."/>
            <person name="Iida K."/>
            <person name="Karnes M."/>
            <person name="Khan S."/>
            <person name="Koesema E."/>
            <person name="Ishida J."/>
            <person name="Jiang P.X."/>
            <person name="Jones T."/>
            <person name="Kawai J."/>
            <person name="Kamiya A."/>
            <person name="Meyers C."/>
            <person name="Nakajima M."/>
            <person name="Narusaka M."/>
            <person name="Seki M."/>
            <person name="Sakurai T."/>
            <person name="Satou M."/>
            <person name="Tamse R."/>
            <person name="Vaysberg M."/>
            <person name="Wallender E.K."/>
            <person name="Wong C."/>
            <person name="Yamamura Y."/>
            <person name="Yuan S."/>
            <person name="Shinozaki K."/>
            <person name="Davis R.W."/>
            <person name="Theologis A."/>
            <person name="Ecker J.R."/>
        </authorList>
    </citation>
    <scope>NUCLEOTIDE SEQUENCE [LARGE SCALE MRNA]</scope>
    <source>
        <strain>cv. Columbia</strain>
    </source>
</reference>
<reference key="4">
    <citation type="journal article" date="2017" name="FEBS Lett.">
        <title>Functional identification of AtAVT3, a family of vacuolar amino acid transporters, in Arabidopsis.</title>
        <authorList>
            <person name="Fujiki Y."/>
            <person name="Teshima H."/>
            <person name="Kashiwao S."/>
            <person name="Kawano-Kawada M."/>
            <person name="Ohsumi Y."/>
            <person name="Kakinuma Y."/>
            <person name="Sekito T."/>
        </authorList>
    </citation>
    <scope>GENE FAMILY</scope>
    <scope>NOMENCLATURE</scope>
    <scope>SUBCELLULAR LOCATION</scope>
</reference>
<gene>
    <name evidence="3" type="primary">AVT6E</name>
    <name evidence="5" type="ordered locus">At1g80510</name>
    <name evidence="6" type="ORF">T21F11.16</name>
</gene>
<name>AVT6E_ARATH</name>
<evidence type="ECO:0000255" key="1"/>
<evidence type="ECO:0000269" key="2">
    <source>
    </source>
</evidence>
<evidence type="ECO:0000303" key="3">
    <source>
    </source>
</evidence>
<evidence type="ECO:0000305" key="4"/>
<evidence type="ECO:0000312" key="5">
    <source>
        <dbReference type="Araport" id="AT1G80510"/>
    </source>
</evidence>
<evidence type="ECO:0000312" key="6">
    <source>
        <dbReference type="EMBL" id="AAF27127.1"/>
    </source>
</evidence>
<keyword id="KW-0029">Amino-acid transport</keyword>
<keyword id="KW-0256">Endoplasmic reticulum</keyword>
<keyword id="KW-0472">Membrane</keyword>
<keyword id="KW-1185">Reference proteome</keyword>
<keyword id="KW-0812">Transmembrane</keyword>
<keyword id="KW-1133">Transmembrane helix</keyword>
<keyword id="KW-0813">Transport</keyword>
<keyword id="KW-0926">Vacuole</keyword>
<protein>
    <recommendedName>
        <fullName evidence="4">Amino acid transporter AVT6E</fullName>
        <shortName evidence="3">AtAvt6E</shortName>
    </recommendedName>
</protein>
<sequence>MDSSYSVISKTSYVELQKPTVNGKPRNKLLPSDEESFVNDFDDARNGVGGEDADDLDFDVADYPLVHGKSSNQGSGIYGAVFNLTTSIIGAGIMALPATMKVLGLVLGFVLIILMALLSEISVELLVRFSVLYKSKSYGEVVQFALGKTARVLSEICIIVNNGGVLVVYLIIMGDVMSGSLHHIGVLDQWLGNGFWDHRKVLILIVMVIFLAPLCALNKIDSLSVTSAASVALAVVFVVVCFVVATIKLIEGTIDPPRLSPDFGSKQAILDLLVVIPIMSNAYVCHFNVQPIYNELEGRSPHKMNRVGRITTAICVVVYASTAVSGYLLFGKDTESDILTNFDQDLGIRFSSAVNYIVRIGYILHLVLVFPVIHFSLRETVNTLLFEGSPPLSESKKRSLGLTVVLLALIYIGSTMIPNIWTAFKFTGATSAVSLGFTFPALIALRLGKQSNSLSFVERSVSWLMLILAVVVSIVGTIGNIYSLESKSD</sequence>
<accession>Q9M8L9</accession>
<dbReference type="EMBL" id="AC018849">
    <property type="protein sequence ID" value="AAF27127.1"/>
    <property type="molecule type" value="Genomic_DNA"/>
</dbReference>
<dbReference type="EMBL" id="CP002684">
    <property type="protein sequence ID" value="AEE36414.1"/>
    <property type="molecule type" value="Genomic_DNA"/>
</dbReference>
<dbReference type="EMBL" id="AF428472">
    <property type="protein sequence ID" value="AAL16241.1"/>
    <property type="molecule type" value="mRNA"/>
</dbReference>
<dbReference type="EMBL" id="AY149936">
    <property type="protein sequence ID" value="AAN31090.1"/>
    <property type="molecule type" value="mRNA"/>
</dbReference>
<dbReference type="PIR" id="A96837">
    <property type="entry name" value="A96837"/>
</dbReference>
<dbReference type="RefSeq" id="NP_565239.1">
    <property type="nucleotide sequence ID" value="NM_106699.2"/>
</dbReference>
<dbReference type="SMR" id="Q9M8L9"/>
<dbReference type="FunCoup" id="Q9M8L9">
    <property type="interactions" value="1263"/>
</dbReference>
<dbReference type="IntAct" id="Q9M8L9">
    <property type="interactions" value="1"/>
</dbReference>
<dbReference type="STRING" id="3702.Q9M8L9"/>
<dbReference type="PaxDb" id="3702-AT1G80510.1"/>
<dbReference type="ProteomicsDB" id="241161"/>
<dbReference type="EnsemblPlants" id="AT1G80510.1">
    <property type="protein sequence ID" value="AT1G80510.1"/>
    <property type="gene ID" value="AT1G80510"/>
</dbReference>
<dbReference type="GeneID" id="844390"/>
<dbReference type="Gramene" id="AT1G80510.1">
    <property type="protein sequence ID" value="AT1G80510.1"/>
    <property type="gene ID" value="AT1G80510"/>
</dbReference>
<dbReference type="KEGG" id="ath:AT1G80510"/>
<dbReference type="Araport" id="AT1G80510"/>
<dbReference type="TAIR" id="AT1G80510"/>
<dbReference type="eggNOG" id="KOG1305">
    <property type="taxonomic scope" value="Eukaryota"/>
</dbReference>
<dbReference type="HOGENOM" id="CLU_034419_2_0_1"/>
<dbReference type="InParanoid" id="Q9M8L9"/>
<dbReference type="OMA" id="FLFFGSQ"/>
<dbReference type="OrthoDB" id="28208at2759"/>
<dbReference type="PhylomeDB" id="Q9M8L9"/>
<dbReference type="PRO" id="PR:Q9M8L9"/>
<dbReference type="Proteomes" id="UP000006548">
    <property type="component" value="Chromosome 1"/>
</dbReference>
<dbReference type="ExpressionAtlas" id="Q9M8L9">
    <property type="expression patterns" value="baseline and differential"/>
</dbReference>
<dbReference type="GO" id="GO:0005789">
    <property type="term" value="C:endoplasmic reticulum membrane"/>
    <property type="evidence" value="ECO:0000314"/>
    <property type="project" value="UniProtKB"/>
</dbReference>
<dbReference type="GO" id="GO:0005774">
    <property type="term" value="C:vacuolar membrane"/>
    <property type="evidence" value="ECO:0000314"/>
    <property type="project" value="UniProtKB"/>
</dbReference>
<dbReference type="GO" id="GO:0006865">
    <property type="term" value="P:amino acid transport"/>
    <property type="evidence" value="ECO:0007669"/>
    <property type="project" value="UniProtKB-KW"/>
</dbReference>
<dbReference type="InterPro" id="IPR013057">
    <property type="entry name" value="AA_transpt_TM"/>
</dbReference>
<dbReference type="PANTHER" id="PTHR22950">
    <property type="entry name" value="AMINO ACID TRANSPORTER"/>
    <property type="match status" value="1"/>
</dbReference>
<dbReference type="PANTHER" id="PTHR22950:SF515">
    <property type="entry name" value="AMINO ACID TRANSPORTER AVT6E"/>
    <property type="match status" value="1"/>
</dbReference>
<dbReference type="Pfam" id="PF01490">
    <property type="entry name" value="Aa_trans"/>
    <property type="match status" value="1"/>
</dbReference>